<name>CYB_CORFR</name>
<sequence>MGLNLRKNHPLLKIINNSLIDLPTPSNISAWWNFGSLLGLCLIMQIITGLLLAMHYTADTSLAFASVAHMCRDVQFGWLIRNLHANGASFFFICIYLHIGRGFYYGSYLNKETWNIGVILLLTLMATAFVGYVLPWGQMSFWGATVITNLFSAIPYIGQTLVEWLWGGFSVDNPTLTRFFAFHFLLPFVIAGLTLVHLTFLHETGSNNPLGIPSDCDKIPFHPYYSIKDLLGFALMLIPLITLALFSPNLLGDPENFTPANPLATPPHIKPEWYFLFAYAILRSIPNKLGGVLALAASVLVLFLIPLLHVSKQRSMTFRPLSQILFWTLVADLLILTWVGSQPVEHPFIIIGQLASFAYFAIILILFPVVSALENKILKL</sequence>
<protein>
    <recommendedName>
        <fullName>Cytochrome b</fullName>
    </recommendedName>
    <alternativeName>
        <fullName>Complex III subunit 3</fullName>
    </alternativeName>
    <alternativeName>
        <fullName>Complex III subunit III</fullName>
    </alternativeName>
    <alternativeName>
        <fullName>Cytochrome b-c1 complex subunit 3</fullName>
    </alternativeName>
    <alternativeName>
        <fullName>Ubiquinol-cytochrome-c reductase complex cytochrome b subunit</fullName>
    </alternativeName>
</protein>
<evidence type="ECO:0000250" key="1"/>
<evidence type="ECO:0000250" key="2">
    <source>
        <dbReference type="UniProtKB" id="P00157"/>
    </source>
</evidence>
<evidence type="ECO:0000255" key="3">
    <source>
        <dbReference type="PROSITE-ProRule" id="PRU00967"/>
    </source>
</evidence>
<evidence type="ECO:0000255" key="4">
    <source>
        <dbReference type="PROSITE-ProRule" id="PRU00968"/>
    </source>
</evidence>
<comment type="function">
    <text evidence="2">Component of the ubiquinol-cytochrome c reductase complex (complex III or cytochrome b-c1 complex) that is part of the mitochondrial respiratory chain. The b-c1 complex mediates electron transfer from ubiquinol to cytochrome c. Contributes to the generation of a proton gradient across the mitochondrial membrane that is then used for ATP synthesis.</text>
</comment>
<comment type="cofactor">
    <cofactor evidence="2">
        <name>heme b</name>
        <dbReference type="ChEBI" id="CHEBI:60344"/>
    </cofactor>
    <text evidence="2">Binds 2 heme b groups non-covalently.</text>
</comment>
<comment type="subunit">
    <text evidence="2">The cytochrome bc1 complex contains 11 subunits: 3 respiratory subunits (MT-CYB, CYC1 and UQCRFS1), 2 core proteins (UQCRC1 and UQCRC2) and 6 low-molecular weight proteins (UQCRH/QCR6, UQCRB/QCR7, UQCRQ/QCR8, UQCR10/QCR9, UQCR11/QCR10 and a cleavage product of UQCRFS1). This cytochrome bc1 complex then forms a dimer.</text>
</comment>
<comment type="subcellular location">
    <subcellularLocation>
        <location evidence="2">Mitochondrion inner membrane</location>
        <topology evidence="2">Multi-pass membrane protein</topology>
    </subcellularLocation>
</comment>
<comment type="miscellaneous">
    <text evidence="1">Heme 1 (or BL or b562) is low-potential and absorbs at about 562 nm, and heme 2 (or BH or b566) is high-potential and absorbs at about 566 nm.</text>
</comment>
<comment type="similarity">
    <text evidence="3 4">Belongs to the cytochrome b family.</text>
</comment>
<comment type="caution">
    <text evidence="2">The full-length protein contains only eight transmembrane helices, not nine as predicted by bioinformatics tools.</text>
</comment>
<geneLocation type="mitochondrion"/>
<organism>
    <name type="scientific">Corvus frugilegus</name>
    <name type="common">Rook</name>
    <dbReference type="NCBI Taxonomy" id="75140"/>
    <lineage>
        <taxon>Eukaryota</taxon>
        <taxon>Metazoa</taxon>
        <taxon>Chordata</taxon>
        <taxon>Craniata</taxon>
        <taxon>Vertebrata</taxon>
        <taxon>Euteleostomi</taxon>
        <taxon>Archelosauria</taxon>
        <taxon>Archosauria</taxon>
        <taxon>Dinosauria</taxon>
        <taxon>Saurischia</taxon>
        <taxon>Theropoda</taxon>
        <taxon>Coelurosauria</taxon>
        <taxon>Aves</taxon>
        <taxon>Neognathae</taxon>
        <taxon>Neoaves</taxon>
        <taxon>Telluraves</taxon>
        <taxon>Australaves</taxon>
        <taxon>Passeriformes</taxon>
        <taxon>Corvoidea</taxon>
        <taxon>Corvidae</taxon>
        <taxon>Corvus</taxon>
    </lineage>
</organism>
<gene>
    <name type="primary">MT-CYB</name>
    <name type="synonym">COB</name>
    <name type="synonym">CYTB</name>
    <name type="synonym">MTCYB</name>
</gene>
<proteinExistence type="inferred from homology"/>
<reference key="1">
    <citation type="journal article" date="1998" name="J. Mol. Evol.">
        <title>The complete mitochondrial genome of Rhea americana and early avian divergences.</title>
        <authorList>
            <person name="Harlid A."/>
            <person name="Janke A."/>
            <person name="Arnason U."/>
        </authorList>
    </citation>
    <scope>NUCLEOTIDE SEQUENCE [GENOMIC DNA]</scope>
</reference>
<reference key="2">
    <citation type="journal article" date="1999" name="Proc. R. Soc. B">
        <title>Analyses of mitochondrial DNA nest ratite birds within the Neognathae-supporting a neotenous origin of ratite morphological characters.</title>
        <authorList>
            <person name="Harlid A."/>
            <person name="Arnason U."/>
        </authorList>
    </citation>
    <scope>NUCLEOTIDE SEQUENCE [GENOMIC DNA]</scope>
</reference>
<feature type="chain" id="PRO_0000060812" description="Cytochrome b">
    <location>
        <begin position="1"/>
        <end position="380"/>
    </location>
</feature>
<feature type="transmembrane region" description="Helical" evidence="2">
    <location>
        <begin position="34"/>
        <end position="54"/>
    </location>
</feature>
<feature type="transmembrane region" description="Helical" evidence="2">
    <location>
        <begin position="78"/>
        <end position="99"/>
    </location>
</feature>
<feature type="transmembrane region" description="Helical" evidence="2">
    <location>
        <begin position="114"/>
        <end position="134"/>
    </location>
</feature>
<feature type="transmembrane region" description="Helical" evidence="2">
    <location>
        <begin position="179"/>
        <end position="199"/>
    </location>
</feature>
<feature type="transmembrane region" description="Helical" evidence="2">
    <location>
        <begin position="227"/>
        <end position="247"/>
    </location>
</feature>
<feature type="transmembrane region" description="Helical" evidence="2">
    <location>
        <begin position="289"/>
        <end position="309"/>
    </location>
</feature>
<feature type="transmembrane region" description="Helical" evidence="2">
    <location>
        <begin position="321"/>
        <end position="341"/>
    </location>
</feature>
<feature type="transmembrane region" description="Helical" evidence="2">
    <location>
        <begin position="348"/>
        <end position="368"/>
    </location>
</feature>
<feature type="binding site" description="axial binding residue" evidence="2">
    <location>
        <position position="84"/>
    </location>
    <ligand>
        <name>heme b</name>
        <dbReference type="ChEBI" id="CHEBI:60344"/>
        <label>b562</label>
    </ligand>
    <ligandPart>
        <name>Fe</name>
        <dbReference type="ChEBI" id="CHEBI:18248"/>
    </ligandPart>
</feature>
<feature type="binding site" description="axial binding residue" evidence="2">
    <location>
        <position position="98"/>
    </location>
    <ligand>
        <name>heme b</name>
        <dbReference type="ChEBI" id="CHEBI:60344"/>
        <label>b566</label>
    </ligand>
    <ligandPart>
        <name>Fe</name>
        <dbReference type="ChEBI" id="CHEBI:18248"/>
    </ligandPart>
</feature>
<feature type="binding site" description="axial binding residue" evidence="2">
    <location>
        <position position="183"/>
    </location>
    <ligand>
        <name>heme b</name>
        <dbReference type="ChEBI" id="CHEBI:60344"/>
        <label>b562</label>
    </ligand>
    <ligandPart>
        <name>Fe</name>
        <dbReference type="ChEBI" id="CHEBI:18248"/>
    </ligandPart>
</feature>
<feature type="binding site" description="axial binding residue" evidence="2">
    <location>
        <position position="197"/>
    </location>
    <ligand>
        <name>heme b</name>
        <dbReference type="ChEBI" id="CHEBI:60344"/>
        <label>b566</label>
    </ligand>
    <ligandPart>
        <name>Fe</name>
        <dbReference type="ChEBI" id="CHEBI:18248"/>
    </ligandPart>
</feature>
<feature type="binding site" evidence="2">
    <location>
        <position position="202"/>
    </location>
    <ligand>
        <name>a ubiquinone</name>
        <dbReference type="ChEBI" id="CHEBI:16389"/>
    </ligand>
</feature>
<keyword id="KW-0249">Electron transport</keyword>
<keyword id="KW-0349">Heme</keyword>
<keyword id="KW-0408">Iron</keyword>
<keyword id="KW-0472">Membrane</keyword>
<keyword id="KW-0479">Metal-binding</keyword>
<keyword id="KW-0496">Mitochondrion</keyword>
<keyword id="KW-0999">Mitochondrion inner membrane</keyword>
<keyword id="KW-0679">Respiratory chain</keyword>
<keyword id="KW-0812">Transmembrane</keyword>
<keyword id="KW-1133">Transmembrane helix</keyword>
<keyword id="KW-0813">Transport</keyword>
<keyword id="KW-0830">Ubiquinone</keyword>
<dbReference type="EMBL" id="Y16885">
    <property type="protein sequence ID" value="CAA76513.1"/>
    <property type="molecule type" value="Genomic_DNA"/>
</dbReference>
<dbReference type="EMBL" id="Y18522">
    <property type="protein sequence ID" value="CAA77206.1"/>
    <property type="molecule type" value="Genomic_DNA"/>
</dbReference>
<dbReference type="PIR" id="T11335">
    <property type="entry name" value="T11335"/>
</dbReference>
<dbReference type="RefSeq" id="NP_008547.1">
    <property type="nucleotide sequence ID" value="NC_002069.2"/>
</dbReference>
<dbReference type="SMR" id="O79386"/>
<dbReference type="GeneID" id="808395"/>
<dbReference type="CTD" id="4519"/>
<dbReference type="GO" id="GO:0005743">
    <property type="term" value="C:mitochondrial inner membrane"/>
    <property type="evidence" value="ECO:0007669"/>
    <property type="project" value="UniProtKB-SubCell"/>
</dbReference>
<dbReference type="GO" id="GO:0045275">
    <property type="term" value="C:respiratory chain complex III"/>
    <property type="evidence" value="ECO:0007669"/>
    <property type="project" value="InterPro"/>
</dbReference>
<dbReference type="GO" id="GO:0046872">
    <property type="term" value="F:metal ion binding"/>
    <property type="evidence" value="ECO:0007669"/>
    <property type="project" value="UniProtKB-KW"/>
</dbReference>
<dbReference type="GO" id="GO:0008121">
    <property type="term" value="F:ubiquinol-cytochrome-c reductase activity"/>
    <property type="evidence" value="ECO:0007669"/>
    <property type="project" value="InterPro"/>
</dbReference>
<dbReference type="GO" id="GO:0006122">
    <property type="term" value="P:mitochondrial electron transport, ubiquinol to cytochrome c"/>
    <property type="evidence" value="ECO:0007669"/>
    <property type="project" value="TreeGrafter"/>
</dbReference>
<dbReference type="CDD" id="cd00290">
    <property type="entry name" value="cytochrome_b_C"/>
    <property type="match status" value="1"/>
</dbReference>
<dbReference type="CDD" id="cd00284">
    <property type="entry name" value="Cytochrome_b_N"/>
    <property type="match status" value="1"/>
</dbReference>
<dbReference type="FunFam" id="1.20.810.10:FF:000002">
    <property type="entry name" value="Cytochrome b"/>
    <property type="match status" value="1"/>
</dbReference>
<dbReference type="Gene3D" id="1.20.810.10">
    <property type="entry name" value="Cytochrome Bc1 Complex, Chain C"/>
    <property type="match status" value="1"/>
</dbReference>
<dbReference type="InterPro" id="IPR005798">
    <property type="entry name" value="Cyt_b/b6_C"/>
</dbReference>
<dbReference type="InterPro" id="IPR036150">
    <property type="entry name" value="Cyt_b/b6_C_sf"/>
</dbReference>
<dbReference type="InterPro" id="IPR005797">
    <property type="entry name" value="Cyt_b/b6_N"/>
</dbReference>
<dbReference type="InterPro" id="IPR027387">
    <property type="entry name" value="Cytb/b6-like_sf"/>
</dbReference>
<dbReference type="InterPro" id="IPR030689">
    <property type="entry name" value="Cytochrome_b"/>
</dbReference>
<dbReference type="InterPro" id="IPR048260">
    <property type="entry name" value="Cytochrome_b_C_euk/bac"/>
</dbReference>
<dbReference type="InterPro" id="IPR048259">
    <property type="entry name" value="Cytochrome_b_N_euk/bac"/>
</dbReference>
<dbReference type="InterPro" id="IPR016174">
    <property type="entry name" value="Di-haem_cyt_TM"/>
</dbReference>
<dbReference type="PANTHER" id="PTHR19271">
    <property type="entry name" value="CYTOCHROME B"/>
    <property type="match status" value="1"/>
</dbReference>
<dbReference type="PANTHER" id="PTHR19271:SF16">
    <property type="entry name" value="CYTOCHROME B"/>
    <property type="match status" value="1"/>
</dbReference>
<dbReference type="Pfam" id="PF00032">
    <property type="entry name" value="Cytochrom_B_C"/>
    <property type="match status" value="1"/>
</dbReference>
<dbReference type="Pfam" id="PF00033">
    <property type="entry name" value="Cytochrome_B"/>
    <property type="match status" value="1"/>
</dbReference>
<dbReference type="PIRSF" id="PIRSF038885">
    <property type="entry name" value="COB"/>
    <property type="match status" value="1"/>
</dbReference>
<dbReference type="SUPFAM" id="SSF81648">
    <property type="entry name" value="a domain/subunit of cytochrome bc1 complex (Ubiquinol-cytochrome c reductase)"/>
    <property type="match status" value="1"/>
</dbReference>
<dbReference type="SUPFAM" id="SSF81342">
    <property type="entry name" value="Transmembrane di-heme cytochromes"/>
    <property type="match status" value="1"/>
</dbReference>
<dbReference type="PROSITE" id="PS51003">
    <property type="entry name" value="CYTB_CTER"/>
    <property type="match status" value="1"/>
</dbReference>
<dbReference type="PROSITE" id="PS51002">
    <property type="entry name" value="CYTB_NTER"/>
    <property type="match status" value="1"/>
</dbReference>
<accession>O79386</accession>